<sequence length="65" mass="7387">LTCVTKNTIFGITTENCPAGQNLCFKRWHYVIPRYTEITRGCAATCPIPENYDSIHCCKTDKCNE</sequence>
<feature type="chain" id="PRO_0000093642" description="Muscarinic toxin 3" evidence="4 5">
    <location>
        <begin position="1"/>
        <end position="65"/>
    </location>
</feature>
<feature type="disulfide bond" evidence="1">
    <location>
        <begin position="3"/>
        <end position="24"/>
    </location>
</feature>
<feature type="disulfide bond" evidence="1">
    <location>
        <begin position="17"/>
        <end position="42"/>
    </location>
</feature>
<feature type="disulfide bond" evidence="1">
    <location>
        <begin position="46"/>
        <end position="57"/>
    </location>
</feature>
<feature type="disulfide bond" evidence="1">
    <location>
        <begin position="58"/>
        <end position="63"/>
    </location>
</feature>
<dbReference type="PIR" id="S48648">
    <property type="entry name" value="S48648"/>
</dbReference>
<dbReference type="SMR" id="P81031"/>
<dbReference type="GO" id="GO:0005576">
    <property type="term" value="C:extracellular region"/>
    <property type="evidence" value="ECO:0007669"/>
    <property type="project" value="UniProtKB-SubCell"/>
</dbReference>
<dbReference type="GO" id="GO:0090729">
    <property type="term" value="F:toxin activity"/>
    <property type="evidence" value="ECO:0007669"/>
    <property type="project" value="UniProtKB-KW"/>
</dbReference>
<dbReference type="CDD" id="cd00206">
    <property type="entry name" value="TFP_snake_toxin"/>
    <property type="match status" value="1"/>
</dbReference>
<dbReference type="FunFam" id="2.10.60.10:FF:000024">
    <property type="entry name" value="Cytotoxin 1"/>
    <property type="match status" value="1"/>
</dbReference>
<dbReference type="Gene3D" id="2.10.60.10">
    <property type="entry name" value="CD59"/>
    <property type="match status" value="1"/>
</dbReference>
<dbReference type="InterPro" id="IPR003572">
    <property type="entry name" value="Cytotoxin_Cobra"/>
</dbReference>
<dbReference type="InterPro" id="IPR003571">
    <property type="entry name" value="Snake_3FTx"/>
</dbReference>
<dbReference type="InterPro" id="IPR045860">
    <property type="entry name" value="Snake_toxin-like_sf"/>
</dbReference>
<dbReference type="InterPro" id="IPR018354">
    <property type="entry name" value="Snake_toxin_con_site"/>
</dbReference>
<dbReference type="InterPro" id="IPR054131">
    <property type="entry name" value="Toxin_cobra-type"/>
</dbReference>
<dbReference type="Pfam" id="PF21947">
    <property type="entry name" value="Toxin_cobra-type"/>
    <property type="match status" value="1"/>
</dbReference>
<dbReference type="PRINTS" id="PR00282">
    <property type="entry name" value="CYTOTOXIN"/>
</dbReference>
<dbReference type="SUPFAM" id="SSF57302">
    <property type="entry name" value="Snake toxin-like"/>
    <property type="match status" value="1"/>
</dbReference>
<dbReference type="PROSITE" id="PS00272">
    <property type="entry name" value="SNAKE_TOXIN"/>
    <property type="match status" value="1"/>
</dbReference>
<proteinExistence type="evidence at protein level"/>
<keyword id="KW-0903">Direct protein sequencing</keyword>
<keyword id="KW-1015">Disulfide bond</keyword>
<keyword id="KW-1214">G-protein coupled acetylcholine receptor impairing toxin</keyword>
<keyword id="KW-1213">G-protein coupled receptor impairing toxin</keyword>
<keyword id="KW-0528">Neurotoxin</keyword>
<keyword id="KW-0629">Postsynaptic neurotoxin</keyword>
<keyword id="KW-0964">Secreted</keyword>
<keyword id="KW-0800">Toxin</keyword>
<organism>
    <name type="scientific">Dendroaspis angusticeps</name>
    <name type="common">Eastern green mamba</name>
    <name type="synonym">Naja angusticeps</name>
    <dbReference type="NCBI Taxonomy" id="8618"/>
    <lineage>
        <taxon>Eukaryota</taxon>
        <taxon>Metazoa</taxon>
        <taxon>Chordata</taxon>
        <taxon>Craniata</taxon>
        <taxon>Vertebrata</taxon>
        <taxon>Euteleostomi</taxon>
        <taxon>Lepidosauria</taxon>
        <taxon>Squamata</taxon>
        <taxon>Bifurcata</taxon>
        <taxon>Unidentata</taxon>
        <taxon>Episquamata</taxon>
        <taxon>Toxicofera</taxon>
        <taxon>Serpentes</taxon>
        <taxon>Colubroidea</taxon>
        <taxon>Elapidae</taxon>
        <taxon>Elapinae</taxon>
        <taxon>Dendroaspis</taxon>
    </lineage>
</organism>
<name>3SIM3_DENAN</name>
<accession>P81031</accession>
<accession>Q9PRH6</accession>
<comment type="function">
    <text evidence="2 3 5">Potent antagonist (IC(50)=1-10 nM) of M4 (CHRM4) muscarinic receptors (PubMed:8154745, PubMed:24793485, PubMed:21557730), and CHRM1, ADRA1A (PubMed:8154745), ADRA2A and ADRA2C adrenergic receptors. Also antagonises ADRA1B and ADRA1D adrenergic receptors with a 10-times lower affinity (PubMed:24793485).</text>
</comment>
<comment type="subcellular location">
    <subcellularLocation>
        <location evidence="3 4">Secreted</location>
    </subcellularLocation>
</comment>
<comment type="tissue specificity">
    <text evidence="6">Expressed by the venom gland.</text>
</comment>
<comment type="miscellaneous">
    <text evidence="2 3 4">Negative results: does not show interaction with adrenergic receptors (ADRA2B, ADRB1, ADRB2), dopaminergic receptors (DRD1, DRD2, DRD3, DRD4, DRD5), histaminic receptors (HRH1, HRH3, HRH4), muscarinic receptors (CHRM1, CHRM2, CHRM3, CHRM5), and serotoninergic receptors (HTR1A, HTR2A, HTR2B, HTR2C, HTR5A, HTR6, HTR7).</text>
</comment>
<comment type="miscellaneous">
    <text evidence="6">Is classified as a P-type cytotoxin, since a proline residue stands at position 33 (Pro-31 in standard classification).</text>
</comment>
<comment type="similarity">
    <text evidence="7">Belongs to the three-finger toxin family. Short-chain subfamily. Aminergic toxin sub-subfamily.</text>
</comment>
<protein>
    <recommendedName>
        <fullName>Muscarinic toxin 3</fullName>
        <shortName>MT3</shortName>
    </recommendedName>
</protein>
<evidence type="ECO:0000250" key="1">
    <source>
        <dbReference type="UniProtKB" id="P60301"/>
    </source>
</evidence>
<evidence type="ECO:0000269" key="2">
    <source>
    </source>
</evidence>
<evidence type="ECO:0000269" key="3">
    <source>
    </source>
</evidence>
<evidence type="ECO:0000269" key="4">
    <source>
    </source>
</evidence>
<evidence type="ECO:0000269" key="5">
    <source>
    </source>
</evidence>
<evidence type="ECO:0000305" key="6"/>
<evidence type="ECO:0000305" key="7">
    <source>
    </source>
</evidence>
<reference key="1">
    <citation type="journal article" date="1994" name="Ann. N. Y. Acad. Sci.">
        <title>Protein toxins that bind to muscarinic acetylcholine receptors.</title>
        <authorList>
            <person name="Karlsson E."/>
            <person name="Jolkkonen M."/>
            <person name="Satyapan N."/>
            <person name="Adem A."/>
            <person name="Kumlin E."/>
            <person name="Hellman U."/>
            <person name="Wernstedt C."/>
        </authorList>
    </citation>
    <scope>PROTEIN SEQUENCE</scope>
    <scope>FUNCTION</scope>
    <scope>SUBCELLULAR LOCATION</scope>
</reference>
<reference key="2">
    <citation type="journal article" date="1994" name="FEBS Lett.">
        <title>A toxin from the green mamba Dendroaspis angusticeps: amino acid sequence and selectivity for muscarinic m4 receptors.</title>
        <authorList>
            <person name="Jolkkonen M."/>
            <person name="van Giersbergen P.L."/>
            <person name="Hellman U."/>
            <person name="Wernstedt C."/>
            <person name="Karlsson E."/>
        </authorList>
    </citation>
    <scope>PROTEIN SEQUENCE</scope>
    <scope>SUBCELLULAR LOCATION</scope>
    <scope>FUNCTION</scope>
</reference>
<reference key="3">
    <citation type="journal article" date="1999" name="J. Pharmacol. Exp. Ther.">
        <title>Selectivity profile of muscarinic toxin 3 in functional assays of cloned and native receptors.</title>
        <authorList>
            <person name="Olianas M.C."/>
            <person name="Ingianni A."/>
            <person name="Maullu C."/>
            <person name="Adem A."/>
            <person name="Karlsson E."/>
            <person name="Onali P."/>
        </authorList>
    </citation>
    <scope>FUNCTION</scope>
</reference>
<reference key="4">
    <citation type="journal article" date="2011" name="Br. J. Pharmacol.">
        <title>Adrenoceptor activity of muscarinic toxins identified from mamba venoms.</title>
        <authorList>
            <person name="Naereoja K."/>
            <person name="Kukkonen J.P."/>
            <person name="Rondinelli S."/>
            <person name="Toivola D.M."/>
            <person name="Meriluoto J."/>
            <person name="Naesman J."/>
        </authorList>
    </citation>
    <scope>FUNCTION</scope>
</reference>
<reference key="5">
    <citation type="journal article" date="2014" name="Biochimie">
        <title>Polypharmacology profiles and phylogenetic analysis of three-finger toxins from mamba venom: case of aminergic toxins.</title>
        <authorList>
            <person name="Blanchet G."/>
            <person name="Collet G."/>
            <person name="Mourier G."/>
            <person name="Gilles N."/>
            <person name="Fruchart-Gaillard C."/>
            <person name="Marcon E."/>
            <person name="Servent D."/>
        </authorList>
    </citation>
    <scope>SYNTHESIS</scope>
    <scope>FUNCTION</scope>
</reference>